<proteinExistence type="inferred from homology"/>
<reference key="1">
    <citation type="journal article" date="2001" name="Microb. Drug Resist.">
        <title>Annotated draft genomic sequence from a Streptococcus pneumoniae type 19F clinical isolate.</title>
        <authorList>
            <person name="Dopazo J."/>
            <person name="Mendoza A."/>
            <person name="Herrero J."/>
            <person name="Caldara F."/>
            <person name="Humbert Y."/>
            <person name="Friedli L."/>
            <person name="Guerrier M."/>
            <person name="Grand-Schenk E."/>
            <person name="Gandin C."/>
            <person name="de Francesco M."/>
            <person name="Polissi A."/>
            <person name="Buell G."/>
            <person name="Feger G."/>
            <person name="Garcia E."/>
            <person name="Peitsch M."/>
            <person name="Garcia-Bustos J.F."/>
        </authorList>
    </citation>
    <scope>NUCLEOTIDE SEQUENCE [LARGE SCALE GENOMIC DNA]</scope>
    <source>
        <strain>G54</strain>
    </source>
</reference>
<reference key="2">
    <citation type="submission" date="2008-03" db="EMBL/GenBank/DDBJ databases">
        <title>Pneumococcal beta glucoside metabolism investigated by whole genome comparison.</title>
        <authorList>
            <person name="Mulas L."/>
            <person name="Trappetti C."/>
            <person name="Hakenbeck R."/>
            <person name="Iannelli F."/>
            <person name="Pozzi G."/>
            <person name="Davidsen T.M."/>
            <person name="Tettelin H."/>
            <person name="Oggioni M."/>
        </authorList>
    </citation>
    <scope>NUCLEOTIDE SEQUENCE [LARGE SCALE GENOMIC DNA]</scope>
    <source>
        <strain>G54</strain>
    </source>
</reference>
<organism>
    <name type="scientific">Streptococcus pneumoniae serotype 19F (strain G54)</name>
    <dbReference type="NCBI Taxonomy" id="512566"/>
    <lineage>
        <taxon>Bacteria</taxon>
        <taxon>Bacillati</taxon>
        <taxon>Bacillota</taxon>
        <taxon>Bacilli</taxon>
        <taxon>Lactobacillales</taxon>
        <taxon>Streptococcaceae</taxon>
        <taxon>Streptococcus</taxon>
    </lineage>
</organism>
<name>RNZ_STRP4</name>
<dbReference type="EC" id="3.1.26.11" evidence="1"/>
<dbReference type="EMBL" id="CP001015">
    <property type="protein sequence ID" value="ACF55119.1"/>
    <property type="molecule type" value="Genomic_DNA"/>
</dbReference>
<dbReference type="SMR" id="B5E2R6"/>
<dbReference type="KEGG" id="spx:SPG_0615"/>
<dbReference type="HOGENOM" id="CLU_031317_2_0_9"/>
<dbReference type="GO" id="GO:0042781">
    <property type="term" value="F:3'-tRNA processing endoribonuclease activity"/>
    <property type="evidence" value="ECO:0007669"/>
    <property type="project" value="UniProtKB-UniRule"/>
</dbReference>
<dbReference type="GO" id="GO:0008270">
    <property type="term" value="F:zinc ion binding"/>
    <property type="evidence" value="ECO:0007669"/>
    <property type="project" value="UniProtKB-UniRule"/>
</dbReference>
<dbReference type="CDD" id="cd07717">
    <property type="entry name" value="RNaseZ_ZiPD-like_MBL-fold"/>
    <property type="match status" value="1"/>
</dbReference>
<dbReference type="FunFam" id="3.60.15.10:FF:000002">
    <property type="entry name" value="Ribonuclease Z"/>
    <property type="match status" value="1"/>
</dbReference>
<dbReference type="Gene3D" id="3.60.15.10">
    <property type="entry name" value="Ribonuclease Z/Hydroxyacylglutathione hydrolase-like"/>
    <property type="match status" value="1"/>
</dbReference>
<dbReference type="HAMAP" id="MF_01818">
    <property type="entry name" value="RNase_Z_BN"/>
    <property type="match status" value="1"/>
</dbReference>
<dbReference type="InterPro" id="IPR001279">
    <property type="entry name" value="Metallo-B-lactamas"/>
</dbReference>
<dbReference type="InterPro" id="IPR036866">
    <property type="entry name" value="RibonucZ/Hydroxyglut_hydro"/>
</dbReference>
<dbReference type="InterPro" id="IPR013471">
    <property type="entry name" value="RNase_Z/BN"/>
</dbReference>
<dbReference type="NCBIfam" id="NF000801">
    <property type="entry name" value="PRK00055.1-3"/>
    <property type="match status" value="1"/>
</dbReference>
<dbReference type="NCBIfam" id="TIGR02651">
    <property type="entry name" value="RNase_Z"/>
    <property type="match status" value="1"/>
</dbReference>
<dbReference type="PANTHER" id="PTHR46018">
    <property type="entry name" value="ZINC PHOSPHODIESTERASE ELAC PROTEIN 1"/>
    <property type="match status" value="1"/>
</dbReference>
<dbReference type="PANTHER" id="PTHR46018:SF2">
    <property type="entry name" value="ZINC PHOSPHODIESTERASE ELAC PROTEIN 1"/>
    <property type="match status" value="1"/>
</dbReference>
<dbReference type="Pfam" id="PF00753">
    <property type="entry name" value="Lactamase_B"/>
    <property type="match status" value="1"/>
</dbReference>
<dbReference type="SUPFAM" id="SSF56281">
    <property type="entry name" value="Metallo-hydrolase/oxidoreductase"/>
    <property type="match status" value="1"/>
</dbReference>
<sequence length="309" mass="34197">MDIQFLGTGAGQPSKARNVSSLALKLLDEINEVWLFDCGEGTQNRILETTIRPRKVSKIFITHLHGDHIFGLPGFLSSRAFQANEEQTDLEIYGPQGIKSFVLTSLRVSGSRLPYRIHFHEFDQDSLGKILETDKFTVYAEELDHTIFCVGYRVMQKDLEGTLDAKKLKAAGVPFGPLFGKIKNGQDLVLEDGTEIKAADYISAPRPGKIITILGDTRKTDASVRLAVNADVLVHESTYGKGDEKIARNHGHSTNMQAAQVAVEAGAKRLLLNHISARFLSKDISKLKKDAATIFENVHVVKDLEEVEI</sequence>
<comment type="function">
    <text evidence="1">Zinc phosphodiesterase, which displays some tRNA 3'-processing endonuclease activity. Probably involved in tRNA maturation, by removing a 3'-trailer from precursor tRNA.</text>
</comment>
<comment type="catalytic activity">
    <reaction evidence="1">
        <text>Endonucleolytic cleavage of RNA, removing extra 3' nucleotides from tRNA precursor, generating 3' termini of tRNAs. A 3'-hydroxy group is left at the tRNA terminus and a 5'-phosphoryl group is left at the trailer molecule.</text>
        <dbReference type="EC" id="3.1.26.11"/>
    </reaction>
</comment>
<comment type="cofactor">
    <cofactor evidence="1">
        <name>Zn(2+)</name>
        <dbReference type="ChEBI" id="CHEBI:29105"/>
    </cofactor>
    <text evidence="1">Binds 2 Zn(2+) ions.</text>
</comment>
<comment type="subunit">
    <text evidence="1">Homodimer.</text>
</comment>
<comment type="similarity">
    <text evidence="1">Belongs to the RNase Z family.</text>
</comment>
<feature type="chain" id="PRO_1000187992" description="Ribonuclease Z">
    <location>
        <begin position="1"/>
        <end position="309"/>
    </location>
</feature>
<feature type="active site" description="Proton acceptor" evidence="1">
    <location>
        <position position="67"/>
    </location>
</feature>
<feature type="binding site" evidence="1">
    <location>
        <position position="63"/>
    </location>
    <ligand>
        <name>Zn(2+)</name>
        <dbReference type="ChEBI" id="CHEBI:29105"/>
        <label>1</label>
        <note>catalytic</note>
    </ligand>
</feature>
<feature type="binding site" evidence="1">
    <location>
        <position position="65"/>
    </location>
    <ligand>
        <name>Zn(2+)</name>
        <dbReference type="ChEBI" id="CHEBI:29105"/>
        <label>1</label>
        <note>catalytic</note>
    </ligand>
</feature>
<feature type="binding site" evidence="1">
    <location>
        <position position="67"/>
    </location>
    <ligand>
        <name>Zn(2+)</name>
        <dbReference type="ChEBI" id="CHEBI:29105"/>
        <label>2</label>
        <note>catalytic</note>
    </ligand>
</feature>
<feature type="binding site" evidence="1">
    <location>
        <position position="68"/>
    </location>
    <ligand>
        <name>Zn(2+)</name>
        <dbReference type="ChEBI" id="CHEBI:29105"/>
        <label>2</label>
        <note>catalytic</note>
    </ligand>
</feature>
<feature type="binding site" evidence="1">
    <location>
        <position position="145"/>
    </location>
    <ligand>
        <name>Zn(2+)</name>
        <dbReference type="ChEBI" id="CHEBI:29105"/>
        <label>1</label>
        <note>catalytic</note>
    </ligand>
</feature>
<feature type="binding site" evidence="1">
    <location>
        <position position="216"/>
    </location>
    <ligand>
        <name>Zn(2+)</name>
        <dbReference type="ChEBI" id="CHEBI:29105"/>
        <label>1</label>
        <note>catalytic</note>
    </ligand>
</feature>
<feature type="binding site" evidence="1">
    <location>
        <position position="216"/>
    </location>
    <ligand>
        <name>Zn(2+)</name>
        <dbReference type="ChEBI" id="CHEBI:29105"/>
        <label>2</label>
        <note>catalytic</note>
    </ligand>
</feature>
<feature type="binding site" evidence="1">
    <location>
        <position position="274"/>
    </location>
    <ligand>
        <name>Zn(2+)</name>
        <dbReference type="ChEBI" id="CHEBI:29105"/>
        <label>2</label>
        <note>catalytic</note>
    </ligand>
</feature>
<accession>B5E2R6</accession>
<protein>
    <recommendedName>
        <fullName evidence="1">Ribonuclease Z</fullName>
        <shortName evidence="1">RNase Z</shortName>
        <ecNumber evidence="1">3.1.26.11</ecNumber>
    </recommendedName>
    <alternativeName>
        <fullName evidence="1">tRNA 3 endonuclease</fullName>
    </alternativeName>
    <alternativeName>
        <fullName evidence="1">tRNase Z</fullName>
    </alternativeName>
</protein>
<keyword id="KW-0255">Endonuclease</keyword>
<keyword id="KW-0378">Hydrolase</keyword>
<keyword id="KW-0479">Metal-binding</keyword>
<keyword id="KW-0540">Nuclease</keyword>
<keyword id="KW-0819">tRNA processing</keyword>
<keyword id="KW-0862">Zinc</keyword>
<gene>
    <name evidence="1" type="primary">rnz</name>
    <name type="ordered locus">SPG_0615</name>
</gene>
<evidence type="ECO:0000255" key="1">
    <source>
        <dbReference type="HAMAP-Rule" id="MF_01818"/>
    </source>
</evidence>